<organism>
    <name type="scientific">Bacteroides fragilis (strain YCH46)</name>
    <dbReference type="NCBI Taxonomy" id="295405"/>
    <lineage>
        <taxon>Bacteria</taxon>
        <taxon>Pseudomonadati</taxon>
        <taxon>Bacteroidota</taxon>
        <taxon>Bacteroidia</taxon>
        <taxon>Bacteroidales</taxon>
        <taxon>Bacteroidaceae</taxon>
        <taxon>Bacteroides</taxon>
    </lineage>
</organism>
<sequence length="106" mass="11407">MSKLHIKKGDTVYVNAGEDKGKTGRVLKVLVKEGRAIVEGINMVSKSTKPNAKNPQGGIVKQEAPIHISNLNPVDPKTGKATRVGRKVSSEGTLVRYSKKSGEEIK</sequence>
<comment type="function">
    <text evidence="1">One of two assembly initiator proteins, it binds directly to the 5'-end of the 23S rRNA, where it nucleates assembly of the 50S subunit.</text>
</comment>
<comment type="function">
    <text evidence="1">One of the proteins that surrounds the polypeptide exit tunnel on the outside of the subunit.</text>
</comment>
<comment type="subunit">
    <text evidence="1">Part of the 50S ribosomal subunit.</text>
</comment>
<comment type="similarity">
    <text evidence="1">Belongs to the universal ribosomal protein uL24 family.</text>
</comment>
<feature type="chain" id="PRO_0000241567" description="Large ribosomal subunit protein uL24">
    <location>
        <begin position="1"/>
        <end position="106"/>
    </location>
</feature>
<feature type="region of interest" description="Disordered" evidence="2">
    <location>
        <begin position="69"/>
        <end position="106"/>
    </location>
</feature>
<proteinExistence type="inferred from homology"/>
<gene>
    <name evidence="1" type="primary">rplX</name>
    <name type="ordered locus">BF4170</name>
</gene>
<dbReference type="EMBL" id="AP006841">
    <property type="protein sequence ID" value="BAD50913.1"/>
    <property type="molecule type" value="Genomic_DNA"/>
</dbReference>
<dbReference type="RefSeq" id="WP_005791554.1">
    <property type="nucleotide sequence ID" value="NZ_UYXF01000007.1"/>
</dbReference>
<dbReference type="RefSeq" id="YP_101447.1">
    <property type="nucleotide sequence ID" value="NC_006347.1"/>
</dbReference>
<dbReference type="SMR" id="Q64NL9"/>
<dbReference type="STRING" id="295405.BF4170"/>
<dbReference type="GeneID" id="93105313"/>
<dbReference type="KEGG" id="bfr:BF4170"/>
<dbReference type="PATRIC" id="fig|295405.11.peg.4024"/>
<dbReference type="HOGENOM" id="CLU_093315_2_0_10"/>
<dbReference type="OrthoDB" id="9807419at2"/>
<dbReference type="Proteomes" id="UP000002197">
    <property type="component" value="Chromosome"/>
</dbReference>
<dbReference type="GO" id="GO:1990904">
    <property type="term" value="C:ribonucleoprotein complex"/>
    <property type="evidence" value="ECO:0007669"/>
    <property type="project" value="UniProtKB-KW"/>
</dbReference>
<dbReference type="GO" id="GO:0005840">
    <property type="term" value="C:ribosome"/>
    <property type="evidence" value="ECO:0007669"/>
    <property type="project" value="UniProtKB-KW"/>
</dbReference>
<dbReference type="GO" id="GO:0019843">
    <property type="term" value="F:rRNA binding"/>
    <property type="evidence" value="ECO:0007669"/>
    <property type="project" value="UniProtKB-UniRule"/>
</dbReference>
<dbReference type="GO" id="GO:0003735">
    <property type="term" value="F:structural constituent of ribosome"/>
    <property type="evidence" value="ECO:0007669"/>
    <property type="project" value="InterPro"/>
</dbReference>
<dbReference type="GO" id="GO:0006412">
    <property type="term" value="P:translation"/>
    <property type="evidence" value="ECO:0007669"/>
    <property type="project" value="UniProtKB-UniRule"/>
</dbReference>
<dbReference type="CDD" id="cd06089">
    <property type="entry name" value="KOW_RPL26"/>
    <property type="match status" value="1"/>
</dbReference>
<dbReference type="FunFam" id="2.30.30.30:FF:000004">
    <property type="entry name" value="50S ribosomal protein L24"/>
    <property type="match status" value="1"/>
</dbReference>
<dbReference type="Gene3D" id="2.30.30.30">
    <property type="match status" value="1"/>
</dbReference>
<dbReference type="HAMAP" id="MF_01326_B">
    <property type="entry name" value="Ribosomal_uL24_B"/>
    <property type="match status" value="1"/>
</dbReference>
<dbReference type="InterPro" id="IPR005824">
    <property type="entry name" value="KOW"/>
</dbReference>
<dbReference type="InterPro" id="IPR014722">
    <property type="entry name" value="Rib_uL2_dom2"/>
</dbReference>
<dbReference type="InterPro" id="IPR003256">
    <property type="entry name" value="Ribosomal_uL24"/>
</dbReference>
<dbReference type="InterPro" id="IPR041988">
    <property type="entry name" value="Ribosomal_uL24_KOW"/>
</dbReference>
<dbReference type="InterPro" id="IPR008991">
    <property type="entry name" value="Translation_prot_SH3-like_sf"/>
</dbReference>
<dbReference type="NCBIfam" id="TIGR01079">
    <property type="entry name" value="rplX_bact"/>
    <property type="match status" value="1"/>
</dbReference>
<dbReference type="PANTHER" id="PTHR12903">
    <property type="entry name" value="MITOCHONDRIAL RIBOSOMAL PROTEIN L24"/>
    <property type="match status" value="1"/>
</dbReference>
<dbReference type="Pfam" id="PF00467">
    <property type="entry name" value="KOW"/>
    <property type="match status" value="1"/>
</dbReference>
<dbReference type="Pfam" id="PF17136">
    <property type="entry name" value="ribosomal_L24"/>
    <property type="match status" value="1"/>
</dbReference>
<dbReference type="SMART" id="SM00739">
    <property type="entry name" value="KOW"/>
    <property type="match status" value="1"/>
</dbReference>
<dbReference type="SUPFAM" id="SSF50104">
    <property type="entry name" value="Translation proteins SH3-like domain"/>
    <property type="match status" value="1"/>
</dbReference>
<keyword id="KW-0687">Ribonucleoprotein</keyword>
<keyword id="KW-0689">Ribosomal protein</keyword>
<keyword id="KW-0694">RNA-binding</keyword>
<keyword id="KW-0699">rRNA-binding</keyword>
<accession>Q64NL9</accession>
<name>RL24_BACFR</name>
<evidence type="ECO:0000255" key="1">
    <source>
        <dbReference type="HAMAP-Rule" id="MF_01326"/>
    </source>
</evidence>
<evidence type="ECO:0000256" key="2">
    <source>
        <dbReference type="SAM" id="MobiDB-lite"/>
    </source>
</evidence>
<evidence type="ECO:0000305" key="3"/>
<protein>
    <recommendedName>
        <fullName evidence="1">Large ribosomal subunit protein uL24</fullName>
    </recommendedName>
    <alternativeName>
        <fullName evidence="3">50S ribosomal protein L24</fullName>
    </alternativeName>
</protein>
<reference key="1">
    <citation type="journal article" date="2004" name="Proc. Natl. Acad. Sci. U.S.A.">
        <title>Genomic analysis of Bacteroides fragilis reveals extensive DNA inversions regulating cell surface adaptation.</title>
        <authorList>
            <person name="Kuwahara T."/>
            <person name="Yamashita A."/>
            <person name="Hirakawa H."/>
            <person name="Nakayama H."/>
            <person name="Toh H."/>
            <person name="Okada N."/>
            <person name="Kuhara S."/>
            <person name="Hattori M."/>
            <person name="Hayashi T."/>
            <person name="Ohnishi Y."/>
        </authorList>
    </citation>
    <scope>NUCLEOTIDE SEQUENCE [LARGE SCALE GENOMIC DNA]</scope>
    <source>
        <strain>YCH46</strain>
    </source>
</reference>